<protein>
    <recommendedName>
        <fullName evidence="5">Mycosin-3</fullName>
        <ecNumber evidence="1">3.4.21.-</ecNumber>
    </recommendedName>
    <alternativeName>
        <fullName evidence="6">MycP3 protease</fullName>
    </alternativeName>
</protein>
<reference key="1">
    <citation type="journal article" date="1998" name="Nature">
        <title>Deciphering the biology of Mycobacterium tuberculosis from the complete genome sequence.</title>
        <authorList>
            <person name="Cole S.T."/>
            <person name="Brosch R."/>
            <person name="Parkhill J."/>
            <person name="Garnier T."/>
            <person name="Churcher C.M."/>
            <person name="Harris D.E."/>
            <person name="Gordon S.V."/>
            <person name="Eiglmeier K."/>
            <person name="Gas S."/>
            <person name="Barry C.E. III"/>
            <person name="Tekaia F."/>
            <person name="Badcock K."/>
            <person name="Basham D."/>
            <person name="Brown D."/>
            <person name="Chillingworth T."/>
            <person name="Connor R."/>
            <person name="Davies R.M."/>
            <person name="Devlin K."/>
            <person name="Feltwell T."/>
            <person name="Gentles S."/>
            <person name="Hamlin N."/>
            <person name="Holroyd S."/>
            <person name="Hornsby T."/>
            <person name="Jagels K."/>
            <person name="Krogh A."/>
            <person name="McLean J."/>
            <person name="Moule S."/>
            <person name="Murphy L.D."/>
            <person name="Oliver S."/>
            <person name="Osborne J."/>
            <person name="Quail M.A."/>
            <person name="Rajandream M.A."/>
            <person name="Rogers J."/>
            <person name="Rutter S."/>
            <person name="Seeger K."/>
            <person name="Skelton S."/>
            <person name="Squares S."/>
            <person name="Squares R."/>
            <person name="Sulston J.E."/>
            <person name="Taylor K."/>
            <person name="Whitehead S."/>
            <person name="Barrell B.G."/>
        </authorList>
    </citation>
    <scope>NUCLEOTIDE SEQUENCE [LARGE SCALE GENOMIC DNA]</scope>
    <source>
        <strain>ATCC 25618 / H37Rv</strain>
    </source>
</reference>
<reference key="2">
    <citation type="journal article" date="2000" name="Gene">
        <title>The mycosins of Mycobacterium tuberculosis H37Rv: a family of subtilisin-like serine proteases.</title>
        <authorList>
            <person name="Brown G.D."/>
            <person name="Dave J.A."/>
            <person name="Gey van Pittius N.C."/>
            <person name="Stevens L."/>
            <person name="Ehlers M.R."/>
            <person name="Beyers A.D."/>
        </authorList>
    </citation>
    <scope>SUBCELLULAR LOCATION</scope>
    <scope>INDUCTION</scope>
    <source>
        <strain>H37Rv</strain>
    </source>
</reference>
<reference key="3">
    <citation type="journal article" date="2011" name="Mol. Cell. Proteomics">
        <title>Proteogenomic analysis of Mycobacterium tuberculosis by high resolution mass spectrometry.</title>
        <authorList>
            <person name="Kelkar D.S."/>
            <person name="Kumar D."/>
            <person name="Kumar P."/>
            <person name="Balakrishnan L."/>
            <person name="Muthusamy B."/>
            <person name="Yadav A.K."/>
            <person name="Shrivastava P."/>
            <person name="Marimuthu A."/>
            <person name="Anand S."/>
            <person name="Sundaram H."/>
            <person name="Kingsbury R."/>
            <person name="Harsha H.C."/>
            <person name="Nair B."/>
            <person name="Prasad T.S."/>
            <person name="Chauhan D.S."/>
            <person name="Katoch K."/>
            <person name="Katoch V.M."/>
            <person name="Kumar P."/>
            <person name="Chaerkady R."/>
            <person name="Ramachandran S."/>
            <person name="Dash D."/>
            <person name="Pandey A."/>
        </authorList>
    </citation>
    <scope>IDENTIFICATION BY MASS SPECTROMETRY [LARGE SCALE ANALYSIS]</scope>
    <source>
        <strain>ATCC 25618 / H37Rv</strain>
    </source>
</reference>
<keyword id="KW-1003">Cell membrane</keyword>
<keyword id="KW-0378">Hydrolase</keyword>
<keyword id="KW-0472">Membrane</keyword>
<keyword id="KW-0645">Protease</keyword>
<keyword id="KW-1185">Reference proteome</keyword>
<keyword id="KW-0720">Serine protease</keyword>
<keyword id="KW-0732">Signal</keyword>
<keyword id="KW-0812">Transmembrane</keyword>
<keyword id="KW-1133">Transmembrane helix</keyword>
<comment type="subcellular location">
    <subcellularLocation>
        <location evidence="4">Cell membrane</location>
        <topology evidence="2">Single-pass membrane protein</topology>
    </subcellularLocation>
    <text evidence="4">Cell wall-associated.</text>
</comment>
<comment type="induction">
    <text evidence="4">Constitutively expressed during growth in culture.</text>
</comment>
<comment type="similarity">
    <text evidence="6">Belongs to the peptidase S8 family.</text>
</comment>
<organism>
    <name type="scientific">Mycobacterium tuberculosis (strain ATCC 25618 / H37Rv)</name>
    <dbReference type="NCBI Taxonomy" id="83332"/>
    <lineage>
        <taxon>Bacteria</taxon>
        <taxon>Bacillati</taxon>
        <taxon>Actinomycetota</taxon>
        <taxon>Actinomycetes</taxon>
        <taxon>Mycobacteriales</taxon>
        <taxon>Mycobacteriaceae</taxon>
        <taxon>Mycobacterium</taxon>
        <taxon>Mycobacterium tuberculosis complex</taxon>
    </lineage>
</organism>
<name>MYCP3_MYCTU</name>
<feature type="signal peptide" evidence="2">
    <location>
        <begin position="1"/>
        <end position="25"/>
    </location>
</feature>
<feature type="chain" id="PRO_5007697062" description="Mycosin-3">
    <location>
        <begin position="26"/>
        <end position="461"/>
    </location>
</feature>
<feature type="transmembrane region" description="Helical" evidence="2">
    <location>
        <begin position="432"/>
        <end position="452"/>
    </location>
</feature>
<feature type="domain" description="Peptidase S8" evidence="3">
    <location>
        <begin position="64"/>
        <end position="397"/>
    </location>
</feature>
<feature type="active site" description="Charge relay system" evidence="3">
    <location>
        <position position="95"/>
    </location>
</feature>
<feature type="active site" description="Charge relay system" evidence="3">
    <location>
        <position position="126"/>
    </location>
</feature>
<feature type="active site" description="Charge relay system" evidence="3">
    <location>
        <position position="342"/>
    </location>
</feature>
<sequence length="461" mass="46127">MIRAAFACLAATVVVAGWWTPPAWAIGPPVVDAAAQPPSGDPGPVAPMEQRGACSVSGVIPGTDPGVPTPSQTMLNLPAAWQFSRGEGQLVAIIDTGVQPGPRLPNVDAGGDFVESTDGLTDCDGHGTLVAGIVAGQPGNDGFSGVAPAARLLSIRAMSTKFSPRTSGGDPQLAQATLDVAVLAGAIVHAADLGAKVINVSTITCLPADRMVDQAALGAAIRYAAVDKDAVIVAAAGNTGASGSVSASCDSNPLTDLSRPDDPRNWAGVTSVSIPSWWQPYVLSVASLTSAGQPSKFSMPGPWVGIAAPGENIASVSNSGDGALANGLPDAHQKLVALSGTSYAAGYVSGVAALVRSRYPGLNATEVVRRLTATAHRGARESSNIVGAGNLDAVAALTWQLPAEPGGGAAPAKPVADPPVPAPKDTTPRNVAFAGAAALSVLVGLTAATVAIARRRREPTE</sequence>
<evidence type="ECO:0000250" key="1">
    <source>
        <dbReference type="UniProtKB" id="O05461"/>
    </source>
</evidence>
<evidence type="ECO:0000255" key="2"/>
<evidence type="ECO:0000255" key="3">
    <source>
        <dbReference type="PROSITE-ProRule" id="PRU01240"/>
    </source>
</evidence>
<evidence type="ECO:0000269" key="4">
    <source>
    </source>
</evidence>
<evidence type="ECO:0000303" key="5">
    <source>
    </source>
</evidence>
<evidence type="ECO:0000305" key="6"/>
<evidence type="ECO:0000312" key="7">
    <source>
        <dbReference type="EMBL" id="CCP43021.1"/>
    </source>
</evidence>
<accession>O53695</accession>
<accession>F2GM95</accession>
<accession>I6WY21</accession>
<accession>L0T376</accession>
<dbReference type="EC" id="3.4.21.-" evidence="1"/>
<dbReference type="EMBL" id="AL123456">
    <property type="protein sequence ID" value="CCP43021.1"/>
    <property type="molecule type" value="Genomic_DNA"/>
</dbReference>
<dbReference type="RefSeq" id="NP_214805.1">
    <property type="nucleotide sequence ID" value="NC_000962.3"/>
</dbReference>
<dbReference type="RefSeq" id="WP_003401528.1">
    <property type="nucleotide sequence ID" value="NZ_NVQJ01000026.1"/>
</dbReference>
<dbReference type="SMR" id="O53695"/>
<dbReference type="FunCoup" id="O53695">
    <property type="interactions" value="34"/>
</dbReference>
<dbReference type="STRING" id="83332.Rv0291"/>
<dbReference type="MEROPS" id="S08.131"/>
<dbReference type="PaxDb" id="83332-Rv0291"/>
<dbReference type="DNASU" id="886615"/>
<dbReference type="GeneID" id="45424265"/>
<dbReference type="GeneID" id="886615"/>
<dbReference type="KEGG" id="mtu:Rv0291"/>
<dbReference type="KEGG" id="mtv:RVBD_0291"/>
<dbReference type="PATRIC" id="fig|83332.111.peg.327"/>
<dbReference type="TubercuList" id="Rv0291"/>
<dbReference type="eggNOG" id="COG1404">
    <property type="taxonomic scope" value="Bacteria"/>
</dbReference>
<dbReference type="HOGENOM" id="CLU_011263_13_1_11"/>
<dbReference type="InParanoid" id="O53695"/>
<dbReference type="OrthoDB" id="9798386at2"/>
<dbReference type="PhylomeDB" id="O53695"/>
<dbReference type="Proteomes" id="UP000001584">
    <property type="component" value="Chromosome"/>
</dbReference>
<dbReference type="GO" id="GO:0005576">
    <property type="term" value="C:extracellular region"/>
    <property type="evidence" value="ECO:0007005"/>
    <property type="project" value="MTBBASE"/>
</dbReference>
<dbReference type="GO" id="GO:0009274">
    <property type="term" value="C:peptidoglycan-based cell wall"/>
    <property type="evidence" value="ECO:0007005"/>
    <property type="project" value="MTBBASE"/>
</dbReference>
<dbReference type="GO" id="GO:0005886">
    <property type="term" value="C:plasma membrane"/>
    <property type="evidence" value="ECO:0000314"/>
    <property type="project" value="MTBBASE"/>
</dbReference>
<dbReference type="GO" id="GO:0004252">
    <property type="term" value="F:serine-type endopeptidase activity"/>
    <property type="evidence" value="ECO:0000318"/>
    <property type="project" value="GO_Central"/>
</dbReference>
<dbReference type="GO" id="GO:0016485">
    <property type="term" value="P:protein processing"/>
    <property type="evidence" value="ECO:0000318"/>
    <property type="project" value="GO_Central"/>
</dbReference>
<dbReference type="FunFam" id="3.40.50.200:FF:000018">
    <property type="entry name" value="Type VII secretion-associated serine protease mycosin"/>
    <property type="match status" value="1"/>
</dbReference>
<dbReference type="Gene3D" id="3.40.50.200">
    <property type="entry name" value="Peptidase S8/S53 domain"/>
    <property type="match status" value="1"/>
</dbReference>
<dbReference type="InterPro" id="IPR000209">
    <property type="entry name" value="Peptidase_S8/S53_dom"/>
</dbReference>
<dbReference type="InterPro" id="IPR036852">
    <property type="entry name" value="Peptidase_S8/S53_dom_sf"/>
</dbReference>
<dbReference type="InterPro" id="IPR022398">
    <property type="entry name" value="Peptidase_S8_His-AS"/>
</dbReference>
<dbReference type="InterPro" id="IPR015500">
    <property type="entry name" value="Peptidase_S8_subtilisin-rel"/>
</dbReference>
<dbReference type="InterPro" id="IPR023834">
    <property type="entry name" value="T7SS_pept_S8A_mycosin"/>
</dbReference>
<dbReference type="NCBIfam" id="TIGR03921">
    <property type="entry name" value="T7SS_mycosin"/>
    <property type="match status" value="1"/>
</dbReference>
<dbReference type="PANTHER" id="PTHR42884:SF14">
    <property type="entry name" value="NEUROENDOCRINE CONVERTASE 1"/>
    <property type="match status" value="1"/>
</dbReference>
<dbReference type="PANTHER" id="PTHR42884">
    <property type="entry name" value="PROPROTEIN CONVERTASE SUBTILISIN/KEXIN-RELATED"/>
    <property type="match status" value="1"/>
</dbReference>
<dbReference type="Pfam" id="PF00082">
    <property type="entry name" value="Peptidase_S8"/>
    <property type="match status" value="1"/>
</dbReference>
<dbReference type="PRINTS" id="PR00723">
    <property type="entry name" value="SUBTILISIN"/>
</dbReference>
<dbReference type="SUPFAM" id="SSF52743">
    <property type="entry name" value="Subtilisin-like"/>
    <property type="match status" value="1"/>
</dbReference>
<dbReference type="PROSITE" id="PS51892">
    <property type="entry name" value="SUBTILASE"/>
    <property type="match status" value="1"/>
</dbReference>
<dbReference type="PROSITE" id="PS00137">
    <property type="entry name" value="SUBTILASE_HIS"/>
    <property type="match status" value="1"/>
</dbReference>
<proteinExistence type="evidence at protein level"/>
<gene>
    <name evidence="5" type="primary">mycP3</name>
    <name evidence="7" type="ordered locus">Rv0291</name>
</gene>